<protein>
    <recommendedName>
        <fullName>Zinc finger protein 367</fullName>
    </recommendedName>
</protein>
<accession>Q5U2Z0</accession>
<name>ZN367_RAT</name>
<proteinExistence type="evidence at transcript level"/>
<evidence type="ECO:0000250" key="1"/>
<evidence type="ECO:0000250" key="2">
    <source>
        <dbReference type="UniProtKB" id="Q7RTV3"/>
    </source>
</evidence>
<evidence type="ECO:0000255" key="3"/>
<evidence type="ECO:0000255" key="4">
    <source>
        <dbReference type="PROSITE-ProRule" id="PRU00042"/>
    </source>
</evidence>
<evidence type="ECO:0000256" key="5">
    <source>
        <dbReference type="SAM" id="MobiDB-lite"/>
    </source>
</evidence>
<evidence type="ECO:0000305" key="6"/>
<reference key="1">
    <citation type="journal article" date="2004" name="Genome Res.">
        <title>The status, quality, and expansion of the NIH full-length cDNA project: the Mammalian Gene Collection (MGC).</title>
        <authorList>
            <consortium name="The MGC Project Team"/>
        </authorList>
    </citation>
    <scope>NUCLEOTIDE SEQUENCE [LARGE SCALE MRNA]</scope>
    <source>
        <tissue>Testis</tissue>
    </source>
</reference>
<feature type="chain" id="PRO_0000285299" description="Zinc finger protein 367">
    <location>
        <begin position="1"/>
        <end position="340"/>
    </location>
</feature>
<feature type="zinc finger region" description="C2H2-type 1" evidence="4">
    <location>
        <begin position="157"/>
        <end position="179"/>
    </location>
</feature>
<feature type="zinc finger region" description="C2H2-type 2" evidence="4">
    <location>
        <begin position="185"/>
        <end position="209"/>
    </location>
</feature>
<feature type="region of interest" description="Disordered" evidence="5">
    <location>
        <begin position="96"/>
        <end position="140"/>
    </location>
</feature>
<feature type="region of interest" description="Disordered" evidence="5">
    <location>
        <begin position="280"/>
        <end position="317"/>
    </location>
</feature>
<feature type="coiled-coil region" evidence="3">
    <location>
        <begin position="299"/>
        <end position="332"/>
    </location>
</feature>
<feature type="compositionally biased region" description="Low complexity" evidence="5">
    <location>
        <begin position="101"/>
        <end position="114"/>
    </location>
</feature>
<feature type="compositionally biased region" description="Basic and acidic residues" evidence="5">
    <location>
        <begin position="127"/>
        <end position="140"/>
    </location>
</feature>
<feature type="compositionally biased region" description="Basic and acidic residues" evidence="5">
    <location>
        <begin position="307"/>
        <end position="317"/>
    </location>
</feature>
<feature type="modified residue" description="Phosphoserine" evidence="2">
    <location>
        <position position="300"/>
    </location>
</feature>
<keyword id="KW-0010">Activator</keyword>
<keyword id="KW-0175">Coiled coil</keyword>
<keyword id="KW-0238">DNA-binding</keyword>
<keyword id="KW-0479">Metal-binding</keyword>
<keyword id="KW-0539">Nucleus</keyword>
<keyword id="KW-0597">Phosphoprotein</keyword>
<keyword id="KW-1185">Reference proteome</keyword>
<keyword id="KW-0677">Repeat</keyword>
<keyword id="KW-0804">Transcription</keyword>
<keyword id="KW-0805">Transcription regulation</keyword>
<keyword id="KW-0862">Zinc</keyword>
<keyword id="KW-0863">Zinc-finger</keyword>
<sequence length="340" mass="37472">MIRGAPAPMAEPPPVIFCHDSPKRVLVSVIRTTPATPPCSSVGEPEPPPPLVPTSPGFSDFMVYPWRWGENAHNVTLSPGAAGGVVSAGLPAATELPTLRGAPPSSASVAAVSGGEDEEEASSPDSGHLKDGIRRGRPRADTVRDLINEGEHSSSRIRCNICNRVFPREKSLQAHKRTHTGERPYLCDYPDCGKAFVQSGQLKTHQRLHTGEKPFVCSENGCLSRFTHANRHCPKHPYARLKREEPTDTLSKHQSTDNKAAAEWLAKYWEMREQRTPTLKGKLVQKADQEQQDPLEYLQSDEEDDEKSGAQRRLQEQRERLHGALALIELANLTGAPLRQ</sequence>
<dbReference type="EMBL" id="BC085804">
    <property type="protein sequence ID" value="AAH85804.1"/>
    <property type="molecule type" value="mRNA"/>
</dbReference>
<dbReference type="RefSeq" id="NP_001012051.1">
    <property type="nucleotide sequence ID" value="NM_001012051.1"/>
</dbReference>
<dbReference type="SMR" id="Q5U2Z0"/>
<dbReference type="FunCoup" id="Q5U2Z0">
    <property type="interactions" value="1044"/>
</dbReference>
<dbReference type="STRING" id="10116.ENSRNOP00000030325"/>
<dbReference type="PhosphoSitePlus" id="Q5U2Z0"/>
<dbReference type="PaxDb" id="10116-ENSRNOP00000030325"/>
<dbReference type="Ensembl" id="ENSRNOT00000036287.5">
    <property type="protein sequence ID" value="ENSRNOP00000030325.4"/>
    <property type="gene ID" value="ENSRNOG00000027234.5"/>
</dbReference>
<dbReference type="GeneID" id="306695"/>
<dbReference type="KEGG" id="rno:306695"/>
<dbReference type="UCSC" id="RGD:1307136">
    <property type="organism name" value="rat"/>
</dbReference>
<dbReference type="AGR" id="RGD:1307136"/>
<dbReference type="CTD" id="238673"/>
<dbReference type="RGD" id="1307136">
    <property type="gene designation" value="Zfp367"/>
</dbReference>
<dbReference type="eggNOG" id="KOG1721">
    <property type="taxonomic scope" value="Eukaryota"/>
</dbReference>
<dbReference type="GeneTree" id="ENSGT00670000098074"/>
<dbReference type="HOGENOM" id="CLU_068261_0_0_1"/>
<dbReference type="InParanoid" id="Q5U2Z0"/>
<dbReference type="OMA" id="NKHPHVI"/>
<dbReference type="OrthoDB" id="3437960at2759"/>
<dbReference type="PhylomeDB" id="Q5U2Z0"/>
<dbReference type="TreeFam" id="TF321334"/>
<dbReference type="PRO" id="PR:Q5U2Z0"/>
<dbReference type="Proteomes" id="UP000002494">
    <property type="component" value="Chromosome 17"/>
</dbReference>
<dbReference type="Bgee" id="ENSRNOG00000027234">
    <property type="expression patterns" value="Expressed in thymus and 19 other cell types or tissues"/>
</dbReference>
<dbReference type="GO" id="GO:0005654">
    <property type="term" value="C:nucleoplasm"/>
    <property type="evidence" value="ECO:0007669"/>
    <property type="project" value="Ensembl"/>
</dbReference>
<dbReference type="GO" id="GO:0005634">
    <property type="term" value="C:nucleus"/>
    <property type="evidence" value="ECO:0000266"/>
    <property type="project" value="RGD"/>
</dbReference>
<dbReference type="GO" id="GO:0003700">
    <property type="term" value="F:DNA-binding transcription factor activity"/>
    <property type="evidence" value="ECO:0000266"/>
    <property type="project" value="RGD"/>
</dbReference>
<dbReference type="GO" id="GO:0000981">
    <property type="term" value="F:DNA-binding transcription factor activity, RNA polymerase II-specific"/>
    <property type="evidence" value="ECO:0000318"/>
    <property type="project" value="GO_Central"/>
</dbReference>
<dbReference type="GO" id="GO:0000978">
    <property type="term" value="F:RNA polymerase II cis-regulatory region sequence-specific DNA binding"/>
    <property type="evidence" value="ECO:0000318"/>
    <property type="project" value="GO_Central"/>
</dbReference>
<dbReference type="GO" id="GO:0008270">
    <property type="term" value="F:zinc ion binding"/>
    <property type="evidence" value="ECO:0007669"/>
    <property type="project" value="UniProtKB-KW"/>
</dbReference>
<dbReference type="GO" id="GO:0006357">
    <property type="term" value="P:regulation of transcription by RNA polymerase II"/>
    <property type="evidence" value="ECO:0000266"/>
    <property type="project" value="RGD"/>
</dbReference>
<dbReference type="FunFam" id="3.30.160.60:FF:000535">
    <property type="entry name" value="Zinc finger protein 367"/>
    <property type="match status" value="1"/>
</dbReference>
<dbReference type="FunFam" id="3.30.160.60:FF:000474">
    <property type="entry name" value="zinc finger protein 367"/>
    <property type="match status" value="1"/>
</dbReference>
<dbReference type="Gene3D" id="3.30.160.60">
    <property type="entry name" value="Classic Zinc Finger"/>
    <property type="match status" value="2"/>
</dbReference>
<dbReference type="InterPro" id="IPR036236">
    <property type="entry name" value="Znf_C2H2_sf"/>
</dbReference>
<dbReference type="InterPro" id="IPR013087">
    <property type="entry name" value="Znf_C2H2_type"/>
</dbReference>
<dbReference type="PANTHER" id="PTHR14003">
    <property type="entry name" value="TRANSCRIPTIONAL REPRESSOR PROTEIN YY"/>
    <property type="match status" value="1"/>
</dbReference>
<dbReference type="PANTHER" id="PTHR14003:SF26">
    <property type="entry name" value="ZINC FINGER PROTEIN 367"/>
    <property type="match status" value="1"/>
</dbReference>
<dbReference type="Pfam" id="PF00096">
    <property type="entry name" value="zf-C2H2"/>
    <property type="match status" value="1"/>
</dbReference>
<dbReference type="Pfam" id="PF13912">
    <property type="entry name" value="zf-C2H2_6"/>
    <property type="match status" value="1"/>
</dbReference>
<dbReference type="SMART" id="SM00355">
    <property type="entry name" value="ZnF_C2H2"/>
    <property type="match status" value="2"/>
</dbReference>
<dbReference type="SUPFAM" id="SSF57667">
    <property type="entry name" value="beta-beta-alpha zinc fingers"/>
    <property type="match status" value="1"/>
</dbReference>
<dbReference type="PROSITE" id="PS00028">
    <property type="entry name" value="ZINC_FINGER_C2H2_1"/>
    <property type="match status" value="2"/>
</dbReference>
<dbReference type="PROSITE" id="PS50157">
    <property type="entry name" value="ZINC_FINGER_C2H2_2"/>
    <property type="match status" value="2"/>
</dbReference>
<organism>
    <name type="scientific">Rattus norvegicus</name>
    <name type="common">Rat</name>
    <dbReference type="NCBI Taxonomy" id="10116"/>
    <lineage>
        <taxon>Eukaryota</taxon>
        <taxon>Metazoa</taxon>
        <taxon>Chordata</taxon>
        <taxon>Craniata</taxon>
        <taxon>Vertebrata</taxon>
        <taxon>Euteleostomi</taxon>
        <taxon>Mammalia</taxon>
        <taxon>Eutheria</taxon>
        <taxon>Euarchontoglires</taxon>
        <taxon>Glires</taxon>
        <taxon>Rodentia</taxon>
        <taxon>Myomorpha</taxon>
        <taxon>Muroidea</taxon>
        <taxon>Muridae</taxon>
        <taxon>Murinae</taxon>
        <taxon>Rattus</taxon>
    </lineage>
</organism>
<gene>
    <name type="primary">Znf367</name>
    <name type="synonym">Zfp367</name>
</gene>
<comment type="function">
    <text evidence="1">Transcriptional activator. May be involved in transcriptional activation of erythroid genes (By similarity).</text>
</comment>
<comment type="subcellular location">
    <subcellularLocation>
        <location evidence="1">Nucleus</location>
    </subcellularLocation>
</comment>
<comment type="similarity">
    <text evidence="6">Belongs to the krueppel C2H2-type zinc-finger protein family.</text>
</comment>